<feature type="chain" id="PRO_0000331568" description="Sodium/myo-inositol cotransporter 2">
    <location>
        <begin position="1"/>
        <end position="675"/>
    </location>
</feature>
<feature type="topological domain" description="Extracellular" evidence="3">
    <location>
        <begin position="1"/>
        <end position="27"/>
    </location>
</feature>
<feature type="transmembrane region" description="Helical" evidence="3">
    <location>
        <begin position="28"/>
        <end position="48"/>
    </location>
</feature>
<feature type="topological domain" description="Cytoplasmic" evidence="3">
    <location>
        <begin position="49"/>
        <end position="65"/>
    </location>
</feature>
<feature type="transmembrane region" description="Helical" evidence="3">
    <location>
        <begin position="66"/>
        <end position="88"/>
    </location>
</feature>
<feature type="topological domain" description="Extracellular" evidence="3">
    <location>
        <begin position="89"/>
        <end position="102"/>
    </location>
</feature>
<feature type="transmembrane region" description="Helical" evidence="3">
    <location>
        <begin position="103"/>
        <end position="123"/>
    </location>
</feature>
<feature type="topological domain" description="Cytoplasmic" evidence="3">
    <location>
        <begin position="124"/>
        <end position="135"/>
    </location>
</feature>
<feature type="transmembrane region" description="Helical" evidence="3">
    <location>
        <begin position="136"/>
        <end position="156"/>
    </location>
</feature>
<feature type="topological domain" description="Extracellular" evidence="3">
    <location>
        <begin position="157"/>
        <end position="180"/>
    </location>
</feature>
<feature type="transmembrane region" description="Helical" evidence="3">
    <location>
        <begin position="181"/>
        <end position="201"/>
    </location>
</feature>
<feature type="topological domain" description="Cytoplasmic" evidence="3">
    <location>
        <begin position="202"/>
        <end position="208"/>
    </location>
</feature>
<feature type="transmembrane region" description="Helical" evidence="3">
    <location>
        <begin position="209"/>
        <end position="229"/>
    </location>
</feature>
<feature type="topological domain" description="Extracellular" evidence="3">
    <location>
        <begin position="230"/>
        <end position="272"/>
    </location>
</feature>
<feature type="transmembrane region" description="Helical" evidence="3">
    <location>
        <begin position="273"/>
        <end position="293"/>
    </location>
</feature>
<feature type="topological domain" description="Cytoplasmic" evidence="3">
    <location>
        <begin position="294"/>
        <end position="308"/>
    </location>
</feature>
<feature type="transmembrane region" description="Helical" evidence="3">
    <location>
        <begin position="309"/>
        <end position="329"/>
    </location>
</feature>
<feature type="topological domain" description="Extracellular" evidence="3">
    <location>
        <begin position="330"/>
        <end position="375"/>
    </location>
</feature>
<feature type="transmembrane region" description="Helical" evidence="3">
    <location>
        <begin position="376"/>
        <end position="396"/>
    </location>
</feature>
<feature type="topological domain" description="Cytoplasmic" evidence="3">
    <location>
        <begin position="397"/>
        <end position="418"/>
    </location>
</feature>
<feature type="transmembrane region" description="Helical" evidence="3">
    <location>
        <begin position="419"/>
        <end position="439"/>
    </location>
</feature>
<feature type="topological domain" description="Extracellular" evidence="3">
    <location>
        <begin position="440"/>
        <end position="446"/>
    </location>
</feature>
<feature type="transmembrane region" description="Helical" evidence="3">
    <location>
        <begin position="447"/>
        <end position="467"/>
    </location>
</feature>
<feature type="topological domain" description="Cytoplasmic" evidence="3">
    <location>
        <begin position="468"/>
        <end position="479"/>
    </location>
</feature>
<feature type="transmembrane region" description="Helical" evidence="3">
    <location>
        <begin position="480"/>
        <end position="500"/>
    </location>
</feature>
<feature type="topological domain" description="Extracellular" evidence="3">
    <location>
        <begin position="501"/>
        <end position="521"/>
    </location>
</feature>
<feature type="transmembrane region" description="Helical" evidence="3">
    <location>
        <begin position="522"/>
        <end position="542"/>
    </location>
</feature>
<feature type="topological domain" description="Cytoplasmic" evidence="3">
    <location>
        <begin position="543"/>
        <end position="654"/>
    </location>
</feature>
<feature type="transmembrane region" description="Helical" evidence="3">
    <location>
        <begin position="655"/>
        <end position="675"/>
    </location>
</feature>
<feature type="splice variant" id="VSP_052789" description="In isoform 3 and isoform 6." evidence="13">
    <location>
        <begin position="1"/>
        <end position="64"/>
    </location>
</feature>
<feature type="splice variant" id="VSP_033259" description="In isoform 4." evidence="12">
    <original>W</original>
    <variation>WVGSPSVAQGTRTQWWQSWLTPASTSWAQVILSPRLPDTEEVLSTRNRLSPDTKPLGALILNFQVSRI</variation>
    <location>
        <position position="45"/>
    </location>
</feature>
<feature type="splice variant" id="VSP_045034" description="In isoform 5." evidence="12">
    <location>
        <begin position="70"/>
        <end position="104"/>
    </location>
</feature>
<feature type="splice variant" id="VSP_052790" description="In isoform 2 and isoform 5." evidence="11 12">
    <location>
        <begin position="125"/>
        <end position="159"/>
    </location>
</feature>
<feature type="splice variant" id="VSP_045035" description="In isoform 6." evidence="13">
    <original>FAAVGGMEGLKEKYFLALASNRSENSSCGLPREDAFHIFRDPLTSDLPWPGVLFGMSIPSLWYWCTDQVIVQRTLAAKNL</original>
    <variation>DCPADSGCQEPVPCQRRCSDGCIPEGAAPLHNGVPWDGQPHPLPRSSGLCRSRDLPEDLQQPLRLFGHRVSQTRAGTPAH</variation>
    <location>
        <begin position="223"/>
        <end position="302"/>
    </location>
</feature>
<feature type="splice variant" id="VSP_045036" description="In isoform 6." evidence="13">
    <location>
        <begin position="303"/>
        <end position="394"/>
    </location>
</feature>
<feature type="sequence variant" id="VAR_052494" description="In dbSNP:rs36048966.">
    <original>T</original>
    <variation>P</variation>
    <location>
        <position position="47"/>
    </location>
</feature>
<feature type="sequence variant" id="VAR_042896" description="Reduces serum myo-inositol concentration; dbSNP:rs11074656." evidence="4 5 6 10">
    <original>V</original>
    <variation>A</variation>
    <location>
        <position position="182"/>
    </location>
</feature>
<feature type="sequence variant" id="VAR_042897" description="In dbSNP:rs35993597." evidence="4">
    <original>F</original>
    <variation>L</variation>
    <location>
        <position position="258"/>
    </location>
</feature>
<feature type="sequence variant" id="VAR_042898" description="In dbSNP:rs17854935." evidence="7">
    <original>Q</original>
    <variation>R</variation>
    <location>
        <position position="452"/>
    </location>
</feature>
<feature type="sequence variant" id="VAR_042899" evidence="4">
    <original>M</original>
    <variation>I</variation>
    <location>
        <position position="526"/>
    </location>
</feature>
<feature type="sequence variant" id="VAR_061877" description="In dbSNP:rs35038575.">
    <original>V</original>
    <variation>M</variation>
    <location>
        <position position="539"/>
    </location>
</feature>
<feature type="sequence conflict" description="In Ref. 2; AAK97053." evidence="15" ref="2">
    <original>A</original>
    <variation>T</variation>
    <location>
        <position position="41"/>
    </location>
</feature>
<feature type="sequence conflict" description="In Ref. 3; CAC83728." evidence="15" ref="3">
    <original>T</original>
    <variation>P</variation>
    <location>
        <position position="371"/>
    </location>
</feature>
<feature type="sequence conflict" description="In Ref. 6; BAC86105." evidence="15" ref="6">
    <original>S</original>
    <variation>P</variation>
    <location>
        <position position="547"/>
    </location>
</feature>
<evidence type="ECO:0000250" key="1">
    <source>
        <dbReference type="UniProtKB" id="Q28728"/>
    </source>
</evidence>
<evidence type="ECO:0000250" key="2">
    <source>
        <dbReference type="UniProtKB" id="Q9Z1F2"/>
    </source>
</evidence>
<evidence type="ECO:0000255" key="3"/>
<evidence type="ECO:0000269" key="4">
    <source>
    </source>
</evidence>
<evidence type="ECO:0000269" key="5">
    <source>
    </source>
</evidence>
<evidence type="ECO:0000269" key="6">
    <source>
    </source>
</evidence>
<evidence type="ECO:0000269" key="7">
    <source>
    </source>
</evidence>
<evidence type="ECO:0000269" key="8">
    <source>
    </source>
</evidence>
<evidence type="ECO:0000269" key="9">
    <source>
    </source>
</evidence>
<evidence type="ECO:0000269" key="10">
    <source ref="2"/>
</evidence>
<evidence type="ECO:0000303" key="11">
    <source>
    </source>
</evidence>
<evidence type="ECO:0000303" key="12">
    <source>
    </source>
</evidence>
<evidence type="ECO:0000303" key="13">
    <source>
    </source>
</evidence>
<evidence type="ECO:0000303" key="14">
    <source>
    </source>
</evidence>
<evidence type="ECO:0000305" key="15"/>
<evidence type="ECO:0000305" key="16">
    <source>
    </source>
</evidence>
<evidence type="ECO:0000312" key="17">
    <source>
        <dbReference type="EMBL" id="AAH57780.1"/>
    </source>
</evidence>
<evidence type="ECO:0000312" key="18">
    <source>
        <dbReference type="EMBL" id="AAK97053.1"/>
    </source>
</evidence>
<evidence type="ECO:0000312" key="19">
    <source>
        <dbReference type="EMBL" id="AAK97784.1"/>
    </source>
</evidence>
<evidence type="ECO:0000312" key="20">
    <source>
        <dbReference type="EMBL" id="BAC86105.1"/>
    </source>
</evidence>
<evidence type="ECO:0000312" key="21">
    <source>
        <dbReference type="EMBL" id="CAC83728.1"/>
    </source>
</evidence>
<evidence type="ECO:0000312" key="22">
    <source>
        <dbReference type="HGNC" id="HGNC:23091"/>
    </source>
</evidence>
<protein>
    <recommendedName>
        <fullName evidence="15">Sodium/myo-inositol cotransporter 2</fullName>
        <shortName>Na(+)/myo-inositol cotransporter 2</shortName>
    </recommendedName>
    <alternativeName>
        <fullName>Sodium-dependent glucose cotransporter</fullName>
    </alternativeName>
    <alternativeName>
        <fullName>Sodium/glucose cotransporter KST1</fullName>
    </alternativeName>
    <alternativeName>
        <fullName>Sodium/myo-inositol transporter 2</fullName>
        <shortName>SMIT2</shortName>
    </alternativeName>
    <alternativeName>
        <fullName>Solute carrier family 5 member 11</fullName>
    </alternativeName>
</protein>
<sequence>MESGTSSPQPPQLDPLDAFPQKGLEPGDIAVLVLYFLFVLAVGLWSTVKTKRDTVKGYFLAGGDMVWWPVGASLFASNVGSGHFIGLAGSGAATGISVSAYELNGLFSVLMLAWIFLPIYIAGQVTTMPEYLRKRFGGIRIPIILAVLYLFIYIFTKISVDMYAGAIFIQQSLHLDLYLAIVGLLAITAVYTVAGGLAAVIYTDALQTLIMLIGALTLMGYSFAAVGGMEGLKEKYFLALASNRSENSSCGLPREDAFHIFRDPLTSDLPWPGVLFGMSIPSLWYWCTDQVIVQRTLAAKNLSHAKGGALMAAYLKVLPLFIMVFPGMVSRILFPDQVACADPEICQKICSNPSGCSDIAYPKLVLELLPTGLRGLMMAVMVAALMSSLTSIFNSASTIFTMDLWNHLRPRASEKELMIVGRVFVLLLVLVSILWIPVVQASQGGQLFIYIQSISSYLQPPVAVVFIMGCFWKRTNEKGAFWGLISGLLLGLVRLVLDFIYVQPRCDQPDERPVLVKSIHYLYFSMILSTVTLITVSTVSWFTEPPSKEMVSHLTWFTRHDPVVQKEQAPPAAPLSLTLSQNGMPEASSSSSVQFEMVQENTSKTHSCDMTPKQSKVVKAILWLCGIQEKGKEELPARAEAIIVSLEENPLVKTLLDVNLIFCVSCAIFIWGYFA</sequence>
<keyword id="KW-0025">Alternative splicing</keyword>
<keyword id="KW-0053">Apoptosis</keyword>
<keyword id="KW-1003">Cell membrane</keyword>
<keyword id="KW-0406">Ion transport</keyword>
<keyword id="KW-0472">Membrane</keyword>
<keyword id="KW-1267">Proteomics identification</keyword>
<keyword id="KW-1185">Reference proteome</keyword>
<keyword id="KW-0915">Sodium</keyword>
<keyword id="KW-0739">Sodium transport</keyword>
<keyword id="KW-0762">Sugar transport</keyword>
<keyword id="KW-0769">Symport</keyword>
<keyword id="KW-0812">Transmembrane</keyword>
<keyword id="KW-1133">Transmembrane helix</keyword>
<keyword id="KW-0813">Transport</keyword>
<organism>
    <name type="scientific">Homo sapiens</name>
    <name type="common">Human</name>
    <dbReference type="NCBI Taxonomy" id="9606"/>
    <lineage>
        <taxon>Eukaryota</taxon>
        <taxon>Metazoa</taxon>
        <taxon>Chordata</taxon>
        <taxon>Craniata</taxon>
        <taxon>Vertebrata</taxon>
        <taxon>Euteleostomi</taxon>
        <taxon>Mammalia</taxon>
        <taxon>Eutheria</taxon>
        <taxon>Euarchontoglires</taxon>
        <taxon>Primates</taxon>
        <taxon>Haplorrhini</taxon>
        <taxon>Catarrhini</taxon>
        <taxon>Hominidae</taxon>
        <taxon>Homo</taxon>
    </lineage>
</organism>
<dbReference type="EMBL" id="AY044906">
    <property type="protein sequence ID" value="AAK97784.1"/>
    <property type="molecule type" value="mRNA"/>
</dbReference>
<dbReference type="EMBL" id="AF292385">
    <property type="protein sequence ID" value="AAK97053.1"/>
    <property type="molecule type" value="mRNA"/>
</dbReference>
<dbReference type="EMBL" id="AJ305237">
    <property type="protein sequence ID" value="CAC83728.1"/>
    <property type="molecule type" value="mRNA"/>
</dbReference>
<dbReference type="EMBL" id="AK125267">
    <property type="protein sequence ID" value="BAC86105.1"/>
    <property type="molecule type" value="mRNA"/>
</dbReference>
<dbReference type="EMBL" id="AK295427">
    <property type="protein sequence ID" value="BAH12065.1"/>
    <property type="molecule type" value="mRNA"/>
</dbReference>
<dbReference type="EMBL" id="AC008731">
    <property type="status" value="NOT_ANNOTATED_CDS"/>
    <property type="molecule type" value="Genomic_DNA"/>
</dbReference>
<dbReference type="EMBL" id="CH471145">
    <property type="protein sequence ID" value="EAW55781.1"/>
    <property type="molecule type" value="Genomic_DNA"/>
</dbReference>
<dbReference type="EMBL" id="BC049385">
    <property type="protein sequence ID" value="AAH49385.1"/>
    <property type="molecule type" value="mRNA"/>
</dbReference>
<dbReference type="EMBL" id="BC057780">
    <property type="protein sequence ID" value="AAH57780.1"/>
    <property type="molecule type" value="mRNA"/>
</dbReference>
<dbReference type="CCDS" id="CCDS10625.1">
    <molecule id="Q8WWX8-1"/>
</dbReference>
<dbReference type="CCDS" id="CCDS58437.1">
    <molecule id="Q8WWX8-2"/>
</dbReference>
<dbReference type="CCDS" id="CCDS58438.1">
    <molecule id="Q8WWX8-5"/>
</dbReference>
<dbReference type="CCDS" id="CCDS58439.1">
    <molecule id="Q8WWX8-3"/>
</dbReference>
<dbReference type="CCDS" id="CCDS58440.1">
    <molecule id="Q8WWX8-6"/>
</dbReference>
<dbReference type="RefSeq" id="NP_001245340.1">
    <molecule id="Q8WWX8-2"/>
    <property type="nucleotide sequence ID" value="NM_001258411.3"/>
</dbReference>
<dbReference type="RefSeq" id="NP_001245341.1">
    <molecule id="Q8WWX8-5"/>
    <property type="nucleotide sequence ID" value="NM_001258412.3"/>
</dbReference>
<dbReference type="RefSeq" id="NP_001245342.1">
    <molecule id="Q8WWX8-3"/>
    <property type="nucleotide sequence ID" value="NM_001258413.3"/>
</dbReference>
<dbReference type="RefSeq" id="NP_001245343.1">
    <molecule id="Q8WWX8-6"/>
    <property type="nucleotide sequence ID" value="NM_001258414.2"/>
</dbReference>
<dbReference type="RefSeq" id="NP_001339165.1">
    <molecule id="Q8WWX8-3"/>
    <property type="nucleotide sequence ID" value="NM_001352236.2"/>
</dbReference>
<dbReference type="RefSeq" id="NP_001339167.1">
    <molecule id="Q8WWX8-2"/>
    <property type="nucleotide sequence ID" value="NM_001352238.2"/>
</dbReference>
<dbReference type="RefSeq" id="NP_001339171.1">
    <molecule id="Q8WWX8-1"/>
    <property type="nucleotide sequence ID" value="NM_001352242.2"/>
</dbReference>
<dbReference type="RefSeq" id="NP_001339177.1">
    <molecule id="Q8WWX8-1"/>
    <property type="nucleotide sequence ID" value="NM_001352248.3"/>
</dbReference>
<dbReference type="RefSeq" id="NP_001339178.1">
    <molecule id="Q8WWX8-3"/>
    <property type="nucleotide sequence ID" value="NM_001352249.2"/>
</dbReference>
<dbReference type="RefSeq" id="NP_001339188.1">
    <molecule id="Q8WWX8-3"/>
    <property type="nucleotide sequence ID" value="NM_001352259.2"/>
</dbReference>
<dbReference type="RefSeq" id="NP_443176.2">
    <property type="nucleotide sequence ID" value="NM_052944.4"/>
</dbReference>
<dbReference type="RefSeq" id="XP_005255137.1">
    <property type="nucleotide sequence ID" value="XM_005255080.2"/>
</dbReference>
<dbReference type="RefSeq" id="XP_016878389.1">
    <property type="nucleotide sequence ID" value="XM_017022900.1"/>
</dbReference>
<dbReference type="RefSeq" id="XP_016878390.1">
    <property type="nucleotide sequence ID" value="XM_017022901.1"/>
</dbReference>
<dbReference type="RefSeq" id="XP_016878391.1">
    <property type="nucleotide sequence ID" value="XM_017022902.1"/>
</dbReference>
<dbReference type="RefSeq" id="XP_016878392.1">
    <molecule id="Q8WWX8-1"/>
    <property type="nucleotide sequence ID" value="XM_017022903.2"/>
</dbReference>
<dbReference type="RefSeq" id="XP_016878394.1">
    <property type="nucleotide sequence ID" value="XM_017022905.1"/>
</dbReference>
<dbReference type="RefSeq" id="XP_016878395.1">
    <property type="nucleotide sequence ID" value="XM_017022906.1"/>
</dbReference>
<dbReference type="RefSeq" id="XP_047289529.1">
    <molecule id="Q8WWX8-1"/>
    <property type="nucleotide sequence ID" value="XM_047433573.1"/>
</dbReference>
<dbReference type="RefSeq" id="XP_047289530.1">
    <molecule id="Q8WWX8-2"/>
    <property type="nucleotide sequence ID" value="XM_047433574.1"/>
</dbReference>
<dbReference type="RefSeq" id="XP_047289531.1">
    <molecule id="Q8WWX8-3"/>
    <property type="nucleotide sequence ID" value="XM_047433575.1"/>
</dbReference>
<dbReference type="RefSeq" id="XP_054188600.1">
    <molecule id="Q8WWX8-1"/>
    <property type="nucleotide sequence ID" value="XM_054332625.1"/>
</dbReference>
<dbReference type="RefSeq" id="XP_054188601.1">
    <molecule id="Q8WWX8-1"/>
    <property type="nucleotide sequence ID" value="XM_054332626.1"/>
</dbReference>
<dbReference type="RefSeq" id="XP_054188602.1">
    <molecule id="Q8WWX8-1"/>
    <property type="nucleotide sequence ID" value="XM_054332627.1"/>
</dbReference>
<dbReference type="RefSeq" id="XP_054188604.1">
    <molecule id="Q8WWX8-3"/>
    <property type="nucleotide sequence ID" value="XM_054332629.1"/>
</dbReference>
<dbReference type="SMR" id="Q8WWX8"/>
<dbReference type="BioGRID" id="125441">
    <property type="interactions" value="12"/>
</dbReference>
<dbReference type="FunCoup" id="Q8WWX8">
    <property type="interactions" value="88"/>
</dbReference>
<dbReference type="IntAct" id="Q8WWX8">
    <property type="interactions" value="5"/>
</dbReference>
<dbReference type="STRING" id="9606.ENSP00000289932"/>
<dbReference type="BindingDB" id="Q8WWX8"/>
<dbReference type="ChEMBL" id="CHEMBL1744524"/>
<dbReference type="DrugCentral" id="Q8WWX8"/>
<dbReference type="GuidetoPHARMACOLOGY" id="925"/>
<dbReference type="TCDB" id="2.A.21.3.6">
    <property type="family name" value="the solute:sodium symporter (sss) family"/>
</dbReference>
<dbReference type="GlyCosmos" id="Q8WWX8">
    <property type="glycosylation" value="1 site, 1 glycan"/>
</dbReference>
<dbReference type="GlyGen" id="Q8WWX8">
    <property type="glycosylation" value="1 site, 1 O-linked glycan (1 site)"/>
</dbReference>
<dbReference type="iPTMnet" id="Q8WWX8"/>
<dbReference type="PhosphoSitePlus" id="Q8WWX8"/>
<dbReference type="BioMuta" id="SLC5A11"/>
<dbReference type="DMDM" id="74751588"/>
<dbReference type="MassIVE" id="Q8WWX8"/>
<dbReference type="PaxDb" id="9606-ENSP00000289932"/>
<dbReference type="PeptideAtlas" id="Q8WWX8"/>
<dbReference type="ProteomicsDB" id="58368"/>
<dbReference type="ProteomicsDB" id="6486"/>
<dbReference type="ProteomicsDB" id="74950">
    <molecule id="Q8WWX8-1"/>
</dbReference>
<dbReference type="ProteomicsDB" id="74951">
    <molecule id="Q8WWX8-2"/>
</dbReference>
<dbReference type="ProteomicsDB" id="74952">
    <molecule id="Q8WWX8-3"/>
</dbReference>
<dbReference type="ProteomicsDB" id="74953">
    <molecule id="Q8WWX8-4"/>
</dbReference>
<dbReference type="Antibodypedia" id="12746">
    <property type="antibodies" value="130 antibodies from 27 providers"/>
</dbReference>
<dbReference type="DNASU" id="115584"/>
<dbReference type="Ensembl" id="ENST00000347898.7">
    <molecule id="Q8WWX8-1"/>
    <property type="protein sequence ID" value="ENSP00000289932.3"/>
    <property type="gene ID" value="ENSG00000158865.13"/>
</dbReference>
<dbReference type="Ensembl" id="ENST00000424767.7">
    <molecule id="Q8WWX8-1"/>
    <property type="protein sequence ID" value="ENSP00000416782.3"/>
    <property type="gene ID" value="ENSG00000158865.13"/>
</dbReference>
<dbReference type="Ensembl" id="ENST00000565769.5">
    <molecule id="Q8WWX8-3"/>
    <property type="protein sequence ID" value="ENSP00000457179.1"/>
    <property type="gene ID" value="ENSG00000158865.13"/>
</dbReference>
<dbReference type="Ensembl" id="ENST00000567758.6">
    <molecule id="Q8WWX8-2"/>
    <property type="protein sequence ID" value="ENSP00000454401.1"/>
    <property type="gene ID" value="ENSG00000158865.13"/>
</dbReference>
<dbReference type="Ensembl" id="ENST00000568579.6">
    <molecule id="Q8WWX8-5"/>
    <property type="protein sequence ID" value="ENSP00000456234.1"/>
    <property type="gene ID" value="ENSG00000158865.13"/>
</dbReference>
<dbReference type="Ensembl" id="ENST00000569071.2">
    <molecule id="Q8WWX8-6"/>
    <property type="protein sequence ID" value="ENSP00000456376.1"/>
    <property type="gene ID" value="ENSG00000158865.13"/>
</dbReference>
<dbReference type="Ensembl" id="ENST00000671711.1">
    <molecule id="Q8WWX8-6"/>
    <property type="protein sequence ID" value="ENSP00000500525.1"/>
    <property type="gene ID" value="ENSG00000288216.2"/>
</dbReference>
<dbReference type="Ensembl" id="ENST00000672306.1">
    <molecule id="Q8WWX8-6"/>
    <property type="protein sequence ID" value="ENSP00000500570.1"/>
    <property type="gene ID" value="ENSG00000288216.2"/>
</dbReference>
<dbReference type="Ensembl" id="ENST00000672547.1">
    <molecule id="Q8WWX8-2"/>
    <property type="protein sequence ID" value="ENSP00000500395.1"/>
    <property type="gene ID" value="ENSG00000288216.2"/>
</dbReference>
<dbReference type="Ensembl" id="ENST00000672588.1">
    <molecule id="Q8WWX8-1"/>
    <property type="protein sequence ID" value="ENSP00000499965.1"/>
    <property type="gene ID" value="ENSG00000288216.2"/>
</dbReference>
<dbReference type="Ensembl" id="ENST00000672672.1">
    <molecule id="Q8WWX8-5"/>
    <property type="protein sequence ID" value="ENSP00000500207.1"/>
    <property type="gene ID" value="ENSG00000288216.2"/>
</dbReference>
<dbReference type="Ensembl" id="ENST00000672971.1">
    <molecule id="Q8WWX8-5"/>
    <property type="protein sequence ID" value="ENSP00000500955.1"/>
    <property type="gene ID" value="ENSG00000288216.2"/>
</dbReference>
<dbReference type="Ensembl" id="ENST00000673269.1">
    <molecule id="Q8WWX8-2"/>
    <property type="protein sequence ID" value="ENSP00000500384.1"/>
    <property type="gene ID" value="ENSG00000288216.2"/>
</dbReference>
<dbReference type="Ensembl" id="ENST00000673441.1">
    <molecule id="Q8WWX8-3"/>
    <property type="protein sequence ID" value="ENSP00000500055.1"/>
    <property type="gene ID" value="ENSG00000288216.2"/>
</dbReference>
<dbReference type="Ensembl" id="ENST00000710486.1">
    <molecule id="Q8WWX8-1"/>
    <property type="protein sequence ID" value="ENSP00000518306.1"/>
    <property type="gene ID" value="ENSG00000288216.2"/>
</dbReference>
<dbReference type="GeneID" id="115584"/>
<dbReference type="KEGG" id="hsa:115584"/>
<dbReference type="MANE-Select" id="ENST00000424767.7">
    <property type="protein sequence ID" value="ENSP00000416782.3"/>
    <property type="RefSeq nucleotide sequence ID" value="NM_001352248.3"/>
    <property type="RefSeq protein sequence ID" value="NP_001339177.1"/>
</dbReference>
<dbReference type="UCSC" id="uc002dms.5">
    <molecule id="Q8WWX8-1"/>
    <property type="organism name" value="human"/>
</dbReference>
<dbReference type="AGR" id="HGNC:23091"/>
<dbReference type="CTD" id="115584"/>
<dbReference type="DisGeNET" id="115584"/>
<dbReference type="GeneCards" id="SLC5A11"/>
<dbReference type="HGNC" id="HGNC:23091">
    <property type="gene designation" value="SLC5A11"/>
</dbReference>
<dbReference type="HPA" id="ENSG00000158865">
    <property type="expression patterns" value="Tissue enriched (brain)"/>
</dbReference>
<dbReference type="MIM" id="610238">
    <property type="type" value="gene"/>
</dbReference>
<dbReference type="neXtProt" id="NX_Q8WWX8"/>
<dbReference type="OpenTargets" id="ENSG00000158865"/>
<dbReference type="PharmGKB" id="PA134923660"/>
<dbReference type="VEuPathDB" id="HostDB:ENSG00000158865"/>
<dbReference type="eggNOG" id="KOG2349">
    <property type="taxonomic scope" value="Eukaryota"/>
</dbReference>
<dbReference type="GeneTree" id="ENSGT00940000157690"/>
<dbReference type="HOGENOM" id="CLU_018808_9_2_1"/>
<dbReference type="InParanoid" id="Q8WWX8"/>
<dbReference type="OMA" id="NWVFVAK"/>
<dbReference type="OrthoDB" id="6132759at2759"/>
<dbReference type="PAN-GO" id="Q8WWX8">
    <property type="GO annotations" value="3 GO annotations based on evolutionary models"/>
</dbReference>
<dbReference type="PhylomeDB" id="Q8WWX8"/>
<dbReference type="TreeFam" id="TF352855"/>
<dbReference type="PathwayCommons" id="Q8WWX8"/>
<dbReference type="Reactome" id="R-HSA-429593">
    <property type="pathway name" value="Inositol transporters"/>
</dbReference>
<dbReference type="SignaLink" id="Q8WWX8"/>
<dbReference type="BioGRID-ORCS" id="115584">
    <property type="hits" value="15 hits in 1143 CRISPR screens"/>
</dbReference>
<dbReference type="ChiTaRS" id="SLC5A11">
    <property type="organism name" value="human"/>
</dbReference>
<dbReference type="GenomeRNAi" id="115584"/>
<dbReference type="Pharos" id="Q8WWX8">
    <property type="development level" value="Tchem"/>
</dbReference>
<dbReference type="PRO" id="PR:Q8WWX8"/>
<dbReference type="Proteomes" id="UP000005640">
    <property type="component" value="Chromosome 16"/>
</dbReference>
<dbReference type="RNAct" id="Q8WWX8">
    <property type="molecule type" value="protein"/>
</dbReference>
<dbReference type="Bgee" id="ENSG00000158865">
    <property type="expression patterns" value="Expressed in C1 segment of cervical spinal cord and 90 other cell types or tissues"/>
</dbReference>
<dbReference type="ExpressionAtlas" id="Q8WWX8">
    <property type="expression patterns" value="baseline and differential"/>
</dbReference>
<dbReference type="GO" id="GO:0016324">
    <property type="term" value="C:apical plasma membrane"/>
    <property type="evidence" value="ECO:0007669"/>
    <property type="project" value="UniProtKB-SubCell"/>
</dbReference>
<dbReference type="GO" id="GO:0005886">
    <property type="term" value="C:plasma membrane"/>
    <property type="evidence" value="ECO:0000250"/>
    <property type="project" value="UniProtKB"/>
</dbReference>
<dbReference type="GO" id="GO:0005412">
    <property type="term" value="F:D-glucose:sodium symporter activity"/>
    <property type="evidence" value="ECO:0000318"/>
    <property type="project" value="GO_Central"/>
</dbReference>
<dbReference type="GO" id="GO:0005365">
    <property type="term" value="F:myo-inositol transmembrane transporter activity"/>
    <property type="evidence" value="ECO:0000314"/>
    <property type="project" value="UniProtKB"/>
</dbReference>
<dbReference type="GO" id="GO:0015166">
    <property type="term" value="F:polyol transmembrane transporter activity"/>
    <property type="evidence" value="ECO:0000304"/>
    <property type="project" value="Reactome"/>
</dbReference>
<dbReference type="GO" id="GO:0006915">
    <property type="term" value="P:apoptotic process"/>
    <property type="evidence" value="ECO:0007669"/>
    <property type="project" value="UniProtKB-KW"/>
</dbReference>
<dbReference type="GO" id="GO:0015798">
    <property type="term" value="P:myo-inositol transport"/>
    <property type="evidence" value="ECO:0000314"/>
    <property type="project" value="UniProtKB"/>
</dbReference>
<dbReference type="CDD" id="cd11490">
    <property type="entry name" value="SLC5sbd_SGLT6"/>
    <property type="match status" value="1"/>
</dbReference>
<dbReference type="FunFam" id="1.20.1730.10:FF:000012">
    <property type="entry name" value="sodium/myo-inositol cotransporter 2 isoform X1"/>
    <property type="match status" value="1"/>
</dbReference>
<dbReference type="Gene3D" id="1.20.1730.10">
    <property type="entry name" value="Sodium/glucose cotransporter"/>
    <property type="match status" value="1"/>
</dbReference>
<dbReference type="InterPro" id="IPR038377">
    <property type="entry name" value="Na/Glc_symporter_sf"/>
</dbReference>
<dbReference type="InterPro" id="IPR001734">
    <property type="entry name" value="Na/solute_symporter"/>
</dbReference>
<dbReference type="NCBIfam" id="TIGR00813">
    <property type="entry name" value="sss"/>
    <property type="match status" value="1"/>
</dbReference>
<dbReference type="PANTHER" id="PTHR11819:SF171">
    <property type="entry name" value="SODIUM_MYO-INOSITOL COTRANSPORTER 2"/>
    <property type="match status" value="1"/>
</dbReference>
<dbReference type="PANTHER" id="PTHR11819">
    <property type="entry name" value="SOLUTE CARRIER FAMILY 5"/>
    <property type="match status" value="1"/>
</dbReference>
<dbReference type="Pfam" id="PF00474">
    <property type="entry name" value="SSF"/>
    <property type="match status" value="1"/>
</dbReference>
<dbReference type="PROSITE" id="PS50283">
    <property type="entry name" value="NA_SOLUT_SYMP_3"/>
    <property type="match status" value="1"/>
</dbReference>
<gene>
    <name evidence="22" type="primary">SLC5A11</name>
    <name evidence="11" type="synonym">KST1</name>
    <name evidence="21" type="synonym">SLGTX</name>
    <name evidence="14" type="synonym">SMIT2</name>
</gene>
<name>SC5AB_HUMAN</name>
<comment type="function">
    <text evidence="1 2 6 8 9">Involved in the sodium-dependent cotransport of myo-inositol (MI) with a Na(+):MI stoichiometry of 2:1 (PubMed:15172003, PubMed:19032932). Exclusively responsible for apical MI transport and absorption in intestine (By similarity). Can also transport D-chiro-inositol (DCI) but not L-fucose (PubMed:15172003, PubMed:19032932). Exhibits stereospecific cotransport of both D-glucose and D-xylose (By similarity). May induce apoptosis through the TNF-alpha, PDCD1 pathway (PubMed:15172003, PubMed:18069935). May play a role in the regulation of MI concentration in serum, involving reabsorption in at least the proximal tubule of the kidney (By similarity).</text>
</comment>
<comment type="catalytic activity">
    <reaction evidence="9">
        <text>myo-inositol(out) + 2 Na(+)(out) = myo-inositol(in) + 2 Na(+)(in)</text>
        <dbReference type="Rhea" id="RHEA:72987"/>
        <dbReference type="ChEBI" id="CHEBI:17268"/>
        <dbReference type="ChEBI" id="CHEBI:29101"/>
    </reaction>
</comment>
<comment type="catalytic activity">
    <reaction evidence="9">
        <text>1D-chiro-inositol(out) + 2 Na(+)(out) = 1D-chiro-inositol(in) + 2 Na(+)(in)</text>
        <dbReference type="Rhea" id="RHEA:73315"/>
        <dbReference type="ChEBI" id="CHEBI:27372"/>
        <dbReference type="ChEBI" id="CHEBI:29101"/>
    </reaction>
</comment>
<comment type="catalytic activity">
    <reaction evidence="1">
        <text>D-glucose(out) + 2 Na(+)(out) = D-glucose(in) + 2 Na(+)(in)</text>
        <dbReference type="Rhea" id="RHEA:70495"/>
        <dbReference type="ChEBI" id="CHEBI:4167"/>
        <dbReference type="ChEBI" id="CHEBI:29101"/>
    </reaction>
</comment>
<comment type="catalytic activity">
    <reaction evidence="1">
        <text>D-xylose(out) + 2 Na(+)(out) = D-xylose(in) + 2 Na(+)(in)</text>
        <dbReference type="Rhea" id="RHEA:73367"/>
        <dbReference type="ChEBI" id="CHEBI:29101"/>
        <dbReference type="ChEBI" id="CHEBI:53455"/>
    </reaction>
</comment>
<comment type="activity regulation">
    <text evidence="2 9">MI transport activity inhibited by D-chiro-inositol (DCI), phlorizin (Pz) and sodium (Na(+)) (By similarity). Insulin increases D-chiro-inositol uptake (PubMed:19032932).</text>
</comment>
<comment type="biophysicochemical properties">
    <kinetics>
        <KM evidence="9">111 uM for D-chiro-inositol</KM>
        <KM evidence="9">158 uM for myo-inositol</KM>
    </kinetics>
</comment>
<comment type="interaction">
    <interactant intactId="EBI-10277669">
        <id>Q8WWX8</id>
    </interactant>
    <interactant intactId="EBI-358297">
        <id>O00505</id>
        <label>KPNA3</label>
    </interactant>
    <organismsDiffer>false</organismsDiffer>
    <experiments>3</experiments>
</comment>
<comment type="interaction">
    <interactant intactId="EBI-12697471">
        <id>Q8WWX8-3</id>
    </interactant>
    <interactant intactId="EBI-358297">
        <id>O00505</id>
        <label>KPNA3</label>
    </interactant>
    <organismsDiffer>false</organismsDiffer>
    <experiments>3</experiments>
</comment>
<comment type="subcellular location">
    <subcellularLocation>
        <location evidence="16">Membrane</location>
        <topology evidence="3">Multi-pass membrane protein</topology>
    </subcellularLocation>
    <subcellularLocation>
        <location evidence="2">Apical cell membrane</location>
        <topology evidence="2">Multi-pass membrane protein</topology>
    </subcellularLocation>
    <text evidence="1 2">Located on apical membrane of enterocytes (By similarity). Located on membrane of kidney brush border membrane vesicles (BBMVs) and apical membrane of proximal convoluted tubules (By similarity).</text>
</comment>
<comment type="alternative products">
    <event type="alternative splicing"/>
    <isoform>
        <id>Q8WWX8-1</id>
        <name evidence="4">1</name>
        <sequence type="displayed"/>
    </isoform>
    <isoform>
        <id>Q8WWX8-2</id>
        <name evidence="4">2</name>
        <sequence type="described" ref="VSP_052790"/>
    </isoform>
    <isoform>
        <id>Q8WWX8-3</id>
        <name evidence="7">3</name>
        <sequence type="described" ref="VSP_052789"/>
    </isoform>
    <isoform>
        <id>Q8WWX8-4</id>
        <name>4</name>
        <sequence type="described" ref="VSP_033259"/>
    </isoform>
    <isoform>
        <id>Q8WWX8-5</id>
        <name>5</name>
        <sequence type="described" ref="VSP_045034 VSP_052790"/>
    </isoform>
    <isoform>
        <id>Q8WWX8-6</id>
        <name>6</name>
        <sequence type="described" ref="VSP_052789 VSP_045035 VSP_045036"/>
    </isoform>
</comment>
<comment type="tissue specificity">
    <text evidence="4">Highest expression in heart, skeletal muscle, kidney, liver and placenta. Weaker expression in brain, colon, spleen, lung and peripheral blood leukocytes.</text>
</comment>
<comment type="miscellaneous">
    <text evidence="8">Acts as an autoimmune modifier in systemic lupus erythematosus (SLE) as it is significantly associated with low complement component 4 (C4), anti-Smith antibody, serositis, and alopecia.</text>
</comment>
<comment type="similarity">
    <text evidence="3">Belongs to the sodium:solute symporter (SSF) (TC 2.A.21) family.</text>
</comment>
<reference evidence="15 19" key="1">
    <citation type="journal article" date="2002" name="Gene">
        <title>New human sodium/glucose cotransporter gene (KST1): identification, characterization, and mutation analysis in ICCA (infantile convulsions and choreoathetosis) and BFIC (benign familial infantile convulsions) families.</title>
        <authorList>
            <person name="Roll P."/>
            <person name="Massacrier A."/>
            <person name="Pereira S."/>
            <person name="Robaglia-Schlupp A."/>
            <person name="Cau P."/>
            <person name="Szepetowski P."/>
        </authorList>
    </citation>
    <scope>NUCLEOTIDE SEQUENCE [MRNA] (ISOFORMS 1 AND 2)</scope>
    <scope>TISSUE SPECIFICITY</scope>
    <scope>VARIANTS ALA-182; LEU-258 AND ILE-526</scope>
    <source>
        <tissue evidence="4">Brain</tissue>
    </source>
</reference>
<reference evidence="15 18" key="2">
    <citation type="submission" date="2000-08" db="EMBL/GenBank/DDBJ databases">
        <title>Cloning of the human ortholog of RKST1, a member of the SGLT gene family of sodium-coupled cotransporters.</title>
        <authorList>
            <person name="Mount D.B."/>
        </authorList>
    </citation>
    <scope>NUCLEOTIDE SEQUENCE [MRNA] (ISOFORM 1)</scope>
    <scope>VARIANT ALA-182</scope>
</reference>
<reference evidence="15 18" key="3">
    <citation type="submission" date="2003-01" db="EMBL/GenBank/DDBJ databases">
        <title>Cloning and functional characterization of a new human sugar transporter in kidney.</title>
        <authorList>
            <person name="Bruss M."/>
            <person name="Bonisch H."/>
        </authorList>
    </citation>
    <scope>NUCLEOTIDE SEQUENCE [MRNA] (ISOFORM 1)</scope>
    <source>
        <tissue evidence="21">Kidney</tissue>
    </source>
</reference>
<reference evidence="15 20" key="4">
    <citation type="journal article" date="2004" name="Nat. Genet.">
        <title>Complete sequencing and characterization of 21,243 full-length human cDNAs.</title>
        <authorList>
            <person name="Ota T."/>
            <person name="Suzuki Y."/>
            <person name="Nishikawa T."/>
            <person name="Otsuki T."/>
            <person name="Sugiyama T."/>
            <person name="Irie R."/>
            <person name="Wakamatsu A."/>
            <person name="Hayashi K."/>
            <person name="Sato H."/>
            <person name="Nagai K."/>
            <person name="Kimura K."/>
            <person name="Makita H."/>
            <person name="Sekine M."/>
            <person name="Obayashi M."/>
            <person name="Nishi T."/>
            <person name="Shibahara T."/>
            <person name="Tanaka T."/>
            <person name="Ishii S."/>
            <person name="Yamamoto J."/>
            <person name="Saito K."/>
            <person name="Kawai Y."/>
            <person name="Isono Y."/>
            <person name="Nakamura Y."/>
            <person name="Nagahari K."/>
            <person name="Murakami K."/>
            <person name="Yasuda T."/>
            <person name="Iwayanagi T."/>
            <person name="Wagatsuma M."/>
            <person name="Shiratori A."/>
            <person name="Sudo H."/>
            <person name="Hosoiri T."/>
            <person name="Kaku Y."/>
            <person name="Kodaira H."/>
            <person name="Kondo H."/>
            <person name="Sugawara M."/>
            <person name="Takahashi M."/>
            <person name="Kanda K."/>
            <person name="Yokoi T."/>
            <person name="Furuya T."/>
            <person name="Kikkawa E."/>
            <person name="Omura Y."/>
            <person name="Abe K."/>
            <person name="Kamihara K."/>
            <person name="Katsuta N."/>
            <person name="Sato K."/>
            <person name="Tanikawa M."/>
            <person name="Yamazaki M."/>
            <person name="Ninomiya K."/>
            <person name="Ishibashi T."/>
            <person name="Yamashita H."/>
            <person name="Murakawa K."/>
            <person name="Fujimori K."/>
            <person name="Tanai H."/>
            <person name="Kimata M."/>
            <person name="Watanabe M."/>
            <person name="Hiraoka S."/>
            <person name="Chiba Y."/>
            <person name="Ishida S."/>
            <person name="Ono Y."/>
            <person name="Takiguchi S."/>
            <person name="Watanabe S."/>
            <person name="Yosida M."/>
            <person name="Hotuta T."/>
            <person name="Kusano J."/>
            <person name="Kanehori K."/>
            <person name="Takahashi-Fujii A."/>
            <person name="Hara H."/>
            <person name="Tanase T.-O."/>
            <person name="Nomura Y."/>
            <person name="Togiya S."/>
            <person name="Komai F."/>
            <person name="Hara R."/>
            <person name="Takeuchi K."/>
            <person name="Arita M."/>
            <person name="Imose N."/>
            <person name="Musashino K."/>
            <person name="Yuuki H."/>
            <person name="Oshima A."/>
            <person name="Sasaki N."/>
            <person name="Aotsuka S."/>
            <person name="Yoshikawa Y."/>
            <person name="Matsunawa H."/>
            <person name="Ichihara T."/>
            <person name="Shiohata N."/>
            <person name="Sano S."/>
            <person name="Moriya S."/>
            <person name="Momiyama H."/>
            <person name="Satoh N."/>
            <person name="Takami S."/>
            <person name="Terashima Y."/>
            <person name="Suzuki O."/>
            <person name="Nakagawa S."/>
            <person name="Senoh A."/>
            <person name="Mizoguchi H."/>
            <person name="Goto Y."/>
            <person name="Shimizu F."/>
            <person name="Wakebe H."/>
            <person name="Hishigaki H."/>
            <person name="Watanabe T."/>
            <person name="Sugiyama A."/>
            <person name="Takemoto M."/>
            <person name="Kawakami B."/>
            <person name="Yamazaki M."/>
            <person name="Watanabe K."/>
            <person name="Kumagai A."/>
            <person name="Itakura S."/>
            <person name="Fukuzumi Y."/>
            <person name="Fujimori Y."/>
            <person name="Komiyama M."/>
            <person name="Tashiro H."/>
            <person name="Tanigami A."/>
            <person name="Fujiwara T."/>
            <person name="Ono T."/>
            <person name="Yamada K."/>
            <person name="Fujii Y."/>
            <person name="Ozaki K."/>
            <person name="Hirao M."/>
            <person name="Ohmori Y."/>
            <person name="Kawabata A."/>
            <person name="Hikiji T."/>
            <person name="Kobatake N."/>
            <person name="Inagaki H."/>
            <person name="Ikema Y."/>
            <person name="Okamoto S."/>
            <person name="Okitani R."/>
            <person name="Kawakami T."/>
            <person name="Noguchi S."/>
            <person name="Itoh T."/>
            <person name="Shigeta K."/>
            <person name="Senba T."/>
            <person name="Matsumura K."/>
            <person name="Nakajima Y."/>
            <person name="Mizuno T."/>
            <person name="Morinaga M."/>
            <person name="Sasaki M."/>
            <person name="Togashi T."/>
            <person name="Oyama M."/>
            <person name="Hata H."/>
            <person name="Watanabe M."/>
            <person name="Komatsu T."/>
            <person name="Mizushima-Sugano J."/>
            <person name="Satoh T."/>
            <person name="Shirai Y."/>
            <person name="Takahashi Y."/>
            <person name="Nakagawa K."/>
            <person name="Okumura K."/>
            <person name="Nagase T."/>
            <person name="Nomura N."/>
            <person name="Kikuchi H."/>
            <person name="Masuho Y."/>
            <person name="Yamashita R."/>
            <person name="Nakai K."/>
            <person name="Yada T."/>
            <person name="Nakamura Y."/>
            <person name="Ohara O."/>
            <person name="Isogai T."/>
            <person name="Sugano S."/>
        </authorList>
    </citation>
    <scope>NUCLEOTIDE SEQUENCE [LARGE SCALE MRNA] (ISOFORMS 4 AND 5)</scope>
    <scope>VARIANT ALA-182</scope>
    <source>
        <tissue>Corpus callosum</tissue>
        <tissue evidence="20">Kidney</tissue>
    </source>
</reference>
<reference key="5">
    <citation type="journal article" date="2004" name="Nature">
        <title>The sequence and analysis of duplication-rich human chromosome 16.</title>
        <authorList>
            <person name="Martin J."/>
            <person name="Han C."/>
            <person name="Gordon L.A."/>
            <person name="Terry A."/>
            <person name="Prabhakar S."/>
            <person name="She X."/>
            <person name="Xie G."/>
            <person name="Hellsten U."/>
            <person name="Chan Y.M."/>
            <person name="Altherr M."/>
            <person name="Couronne O."/>
            <person name="Aerts A."/>
            <person name="Bajorek E."/>
            <person name="Black S."/>
            <person name="Blumer H."/>
            <person name="Branscomb E."/>
            <person name="Brown N.C."/>
            <person name="Bruno W.J."/>
            <person name="Buckingham J.M."/>
            <person name="Callen D.F."/>
            <person name="Campbell C.S."/>
            <person name="Campbell M.L."/>
            <person name="Campbell E.W."/>
            <person name="Caoile C."/>
            <person name="Challacombe J.F."/>
            <person name="Chasteen L.A."/>
            <person name="Chertkov O."/>
            <person name="Chi H.C."/>
            <person name="Christensen M."/>
            <person name="Clark L.M."/>
            <person name="Cohn J.D."/>
            <person name="Denys M."/>
            <person name="Detter J.C."/>
            <person name="Dickson M."/>
            <person name="Dimitrijevic-Bussod M."/>
            <person name="Escobar J."/>
            <person name="Fawcett J.J."/>
            <person name="Flowers D."/>
            <person name="Fotopulos D."/>
            <person name="Glavina T."/>
            <person name="Gomez M."/>
            <person name="Gonzales E."/>
            <person name="Goodstein D."/>
            <person name="Goodwin L.A."/>
            <person name="Grady D.L."/>
            <person name="Grigoriev I."/>
            <person name="Groza M."/>
            <person name="Hammon N."/>
            <person name="Hawkins T."/>
            <person name="Haydu L."/>
            <person name="Hildebrand C.E."/>
            <person name="Huang W."/>
            <person name="Israni S."/>
            <person name="Jett J."/>
            <person name="Jewett P.B."/>
            <person name="Kadner K."/>
            <person name="Kimball H."/>
            <person name="Kobayashi A."/>
            <person name="Krawczyk M.-C."/>
            <person name="Leyba T."/>
            <person name="Longmire J.L."/>
            <person name="Lopez F."/>
            <person name="Lou Y."/>
            <person name="Lowry S."/>
            <person name="Ludeman T."/>
            <person name="Manohar C.F."/>
            <person name="Mark G.A."/>
            <person name="McMurray K.L."/>
            <person name="Meincke L.J."/>
            <person name="Morgan J."/>
            <person name="Moyzis R.K."/>
            <person name="Mundt M.O."/>
            <person name="Munk A.C."/>
            <person name="Nandkeshwar R.D."/>
            <person name="Pitluck S."/>
            <person name="Pollard M."/>
            <person name="Predki P."/>
            <person name="Parson-Quintana B."/>
            <person name="Ramirez L."/>
            <person name="Rash S."/>
            <person name="Retterer J."/>
            <person name="Ricke D.O."/>
            <person name="Robinson D.L."/>
            <person name="Rodriguez A."/>
            <person name="Salamov A."/>
            <person name="Saunders E.H."/>
            <person name="Scott D."/>
            <person name="Shough T."/>
            <person name="Stallings R.L."/>
            <person name="Stalvey M."/>
            <person name="Sutherland R.D."/>
            <person name="Tapia R."/>
            <person name="Tesmer J.G."/>
            <person name="Thayer N."/>
            <person name="Thompson L.S."/>
            <person name="Tice H."/>
            <person name="Torney D.C."/>
            <person name="Tran-Gyamfi M."/>
            <person name="Tsai M."/>
            <person name="Ulanovsky L.E."/>
            <person name="Ustaszewska A."/>
            <person name="Vo N."/>
            <person name="White P.S."/>
            <person name="Williams A.L."/>
            <person name="Wills P.L."/>
            <person name="Wu J.-R."/>
            <person name="Wu K."/>
            <person name="Yang J."/>
            <person name="DeJong P."/>
            <person name="Bruce D."/>
            <person name="Doggett N.A."/>
            <person name="Deaven L."/>
            <person name="Schmutz J."/>
            <person name="Grimwood J."/>
            <person name="Richardson P."/>
            <person name="Rokhsar D.S."/>
            <person name="Eichler E.E."/>
            <person name="Gilna P."/>
            <person name="Lucas S.M."/>
            <person name="Myers R.M."/>
            <person name="Rubin E.M."/>
            <person name="Pennacchio L.A."/>
        </authorList>
    </citation>
    <scope>NUCLEOTIDE SEQUENCE [LARGE SCALE GENOMIC DNA]</scope>
</reference>
<reference evidence="15 18" key="6">
    <citation type="submission" date="2005-09" db="EMBL/GenBank/DDBJ databases">
        <authorList>
            <person name="Mural R.J."/>
            <person name="Istrail S."/>
            <person name="Sutton G.G."/>
            <person name="Florea L."/>
            <person name="Halpern A.L."/>
            <person name="Mobarry C.M."/>
            <person name="Lippert R."/>
            <person name="Walenz B."/>
            <person name="Shatkay H."/>
            <person name="Dew I."/>
            <person name="Miller J.R."/>
            <person name="Flanigan M.J."/>
            <person name="Edwards N.J."/>
            <person name="Bolanos R."/>
            <person name="Fasulo D."/>
            <person name="Halldorsson B.V."/>
            <person name="Hannenhalli S."/>
            <person name="Turner R."/>
            <person name="Yooseph S."/>
            <person name="Lu F."/>
            <person name="Nusskern D.R."/>
            <person name="Shue B.C."/>
            <person name="Zheng X.H."/>
            <person name="Zhong F."/>
            <person name="Delcher A.L."/>
            <person name="Huson D.H."/>
            <person name="Kravitz S.A."/>
            <person name="Mouchard L."/>
            <person name="Reinert K."/>
            <person name="Remington K.A."/>
            <person name="Clark A.G."/>
            <person name="Waterman M.S."/>
            <person name="Eichler E.E."/>
            <person name="Adams M.D."/>
            <person name="Hunkapiller M.W."/>
            <person name="Myers E.W."/>
            <person name="Venter J.C."/>
        </authorList>
    </citation>
    <scope>NUCLEOTIDE SEQUENCE [LARGE SCALE GENOMIC DNA]</scope>
</reference>
<reference evidence="15 17" key="7">
    <citation type="journal article" date="2004" name="Genome Res.">
        <title>The status, quality, and expansion of the NIH full-length cDNA project: the Mammalian Gene Collection (MGC).</title>
        <authorList>
            <consortium name="The MGC Project Team"/>
        </authorList>
    </citation>
    <scope>NUCLEOTIDE SEQUENCE [LARGE SCALE MRNA] (ISOFORMS 3 AND 6)</scope>
    <scope>VARIANT ARG-452</scope>
    <source>
        <tissue>Brain</tissue>
        <tissue evidence="17">Hypothalamus</tissue>
    </source>
</reference>
<reference key="8">
    <citation type="journal article" date="2009" name="Arch. Biochem. Biophys.">
        <title>Human sodium/inositol cotransporter 2 (SMIT2) transports inositols but not glucose in L6 cells.</title>
        <authorList>
            <person name="Lin X."/>
            <person name="Ma L."/>
            <person name="Fitzgerald R.L."/>
            <person name="Ostlund R.E. Jr."/>
        </authorList>
    </citation>
    <scope>FUNCTION</scope>
    <scope>TRANSPORTER ACTIVITY</scope>
    <scope>BIOPHYSICOCHEMICAL PROPERTIES</scope>
    <scope>ACTIVITY REGULATION</scope>
</reference>
<reference evidence="15" key="9">
    <citation type="journal article" date="2004" name="Mol. Genet. Metab.">
        <title>Spina bifida and genetic factors related to myo-inositol, glucose, and zinc.</title>
        <authorList>
            <person name="Groenen P.M.W."/>
            <person name="Klootwijk R."/>
            <person name="Schijvenaars M.M.V.A.P."/>
            <person name="Straatman H."/>
            <person name="Mariman E.C.M."/>
            <person name="Franke B."/>
            <person name="Steegers-Theunissen R.P.M."/>
        </authorList>
    </citation>
    <scope>FUNCTION</scope>
    <scope>VARIANT ALA-182</scope>
</reference>
<reference evidence="15" key="10">
    <citation type="journal article" date="2008" name="Tissue Antigens">
        <title>The sodium-dependent glucose cotransporter SLC5A11 as an autoimmune modifier gene in SLE.</title>
        <authorList>
            <person name="Tsai L.-J."/>
            <person name="Hsiao S.-H."/>
            <person name="Tsai L.-M."/>
            <person name="Lin C.-Y."/>
            <person name="Tsai J.-J."/>
            <person name="Liou D.-M."/>
            <person name="Lan J.-L."/>
        </authorList>
    </citation>
    <scope>POSSIBLE ROLE IN SLE</scope>
</reference>
<accession>Q8WWX8</accession>
<accession>B7Z329</accession>
<accession>Q05BF1</accession>
<accession>Q6PF02</accession>
<accession>Q6ZUW3</accession>
<accession>Q86Y55</accession>
<accession>Q96PP5</accession>
<proteinExistence type="evidence at protein level"/>